<sequence>MPAVLLVLYVNPPPSVCILTQKLSLGLYNQWWRVCRSVPPPWYVFFNKRSMSTFKLMMDGRLVFAMAIAILSVVLSCGTCEKAKRAVRGRQDRPKEFPPPRYNYTILTRYNATALASPFINDQVKNVDLRIVTATRPCEMIALIAKTNIDSILKELAAAQKTYSARLTWFKIMPTCATPIHDVSYMKCNPKLSFAMCDERSDILWQASLITMAAETDDELGLVLAAPAHSASGLYRRVIEIDGRRIYTDFSVTIPSERCPIAFEQNFGNPDRCKTPEQYSRGEVFTRRFLGEFNFPQGEHMTWLKFWFVYDGGNLPVQFYEAQAFARPVPPDNHPGFDSVESEITQNKTDPKPGQADPKPNQPFKWPSIKHLAPRLDEVDEVIEPVTKPPKTSKSNSTFVGISVGLGIAGLVLVGVILYVCLRRKKELKKSAQNGLTRLRSTFKDVKYTQLP</sequence>
<protein>
    <recommendedName>
        <fullName>Envelope glycoprotein D</fullName>
        <shortName>gD</shortName>
    </recommendedName>
    <alternativeName>
        <fullName>Glycoprotein 17/18</fullName>
    </alternativeName>
</protein>
<reference key="1">
    <citation type="journal article" date="1990" name="J. Gen. Virol.">
        <title>Equine herpesvirus type 1 unique short fragment encodes glycoproteins with homology to herpes simplex virus type 1 gD, gI and gE.</title>
        <authorList>
            <person name="Audonnet J.-C."/>
            <person name="Winslow J."/>
            <person name="Allen G."/>
            <person name="Paoletti E."/>
        </authorList>
    </citation>
    <scope>NUCLEOTIDE SEQUENCE [GENOMIC DNA]</scope>
</reference>
<name>GD_EHV1D</name>
<dbReference type="PIR" id="I36802">
    <property type="entry name" value="VGBEG3"/>
</dbReference>
<dbReference type="SMR" id="P68327"/>
<dbReference type="GlyCosmos" id="P68327">
    <property type="glycosylation" value="4 sites, No reported glycans"/>
</dbReference>
<dbReference type="GO" id="GO:0016020">
    <property type="term" value="C:membrane"/>
    <property type="evidence" value="ECO:0007669"/>
    <property type="project" value="UniProtKB-KW"/>
</dbReference>
<dbReference type="GO" id="GO:0019031">
    <property type="term" value="C:viral envelope"/>
    <property type="evidence" value="ECO:0007669"/>
    <property type="project" value="UniProtKB-KW"/>
</dbReference>
<dbReference type="GO" id="GO:0055036">
    <property type="term" value="C:virion membrane"/>
    <property type="evidence" value="ECO:0007669"/>
    <property type="project" value="UniProtKB-SubCell"/>
</dbReference>
<dbReference type="GO" id="GO:0098670">
    <property type="term" value="P:entry receptor-mediated virion attachment to host cell"/>
    <property type="evidence" value="ECO:0007669"/>
    <property type="project" value="UniProtKB-KW"/>
</dbReference>
<dbReference type="GO" id="GO:0046718">
    <property type="term" value="P:symbiont entry into host cell"/>
    <property type="evidence" value="ECO:0007669"/>
    <property type="project" value="UniProtKB-KW"/>
</dbReference>
<dbReference type="CDD" id="cd12087">
    <property type="entry name" value="TM_EGFR-like"/>
    <property type="match status" value="1"/>
</dbReference>
<dbReference type="Gene3D" id="2.70.230.10">
    <property type="match status" value="1"/>
</dbReference>
<dbReference type="InterPro" id="IPR002896">
    <property type="entry name" value="Herpes_glycop_dom"/>
</dbReference>
<dbReference type="InterPro" id="IPR036179">
    <property type="entry name" value="Ig-like_dom_sf"/>
</dbReference>
<dbReference type="Pfam" id="PF01537">
    <property type="entry name" value="Herpes_glycop_D"/>
    <property type="match status" value="1"/>
</dbReference>
<dbReference type="SUPFAM" id="SSF48726">
    <property type="entry name" value="Immunoglobulin"/>
    <property type="match status" value="1"/>
</dbReference>
<keyword id="KW-1015">Disulfide bond</keyword>
<keyword id="KW-0325">Glycoprotein</keyword>
<keyword id="KW-0945">Host-virus interaction</keyword>
<keyword id="KW-0472">Membrane</keyword>
<keyword id="KW-0732">Signal</keyword>
<keyword id="KW-0812">Transmembrane</keyword>
<keyword id="KW-1133">Transmembrane helix</keyword>
<keyword id="KW-1161">Viral attachment to host cell</keyword>
<keyword id="KW-1234">Viral attachment to host entry receptor</keyword>
<keyword id="KW-0261">Viral envelope protein</keyword>
<keyword id="KW-0946">Virion</keyword>
<keyword id="KW-1160">Virus entry into host cell</keyword>
<feature type="signal peptide" evidence="4">
    <location>
        <begin position="1"/>
        <end position="19"/>
    </location>
</feature>
<feature type="chain" id="PRO_0000038223" description="Envelope glycoprotein D">
    <location>
        <begin position="20"/>
        <end position="452"/>
    </location>
</feature>
<feature type="topological domain" description="Virion surface" evidence="4">
    <location>
        <begin position="20"/>
        <end position="405"/>
    </location>
</feature>
<feature type="transmembrane region" description="Helical" evidence="4">
    <location>
        <begin position="406"/>
        <end position="422"/>
    </location>
</feature>
<feature type="topological domain" description="Intravirion" evidence="4">
    <location>
        <begin position="423"/>
        <end position="452"/>
    </location>
</feature>
<feature type="region of interest" description="Disordered" evidence="5">
    <location>
        <begin position="331"/>
        <end position="365"/>
    </location>
</feature>
<feature type="glycosylation site" description="N-linked (GlcNAc...) asparagine; by host" evidence="4">
    <location>
        <position position="103"/>
    </location>
</feature>
<feature type="glycosylation site" description="N-linked (GlcNAc...) asparagine; by host" evidence="4">
    <location>
        <position position="111"/>
    </location>
</feature>
<feature type="glycosylation site" description="N-linked (GlcNAc...) asparagine; by host" evidence="4">
    <location>
        <position position="347"/>
    </location>
</feature>
<feature type="glycosylation site" description="N-linked (GlcNAc...) asparagine; by host" evidence="4">
    <location>
        <position position="396"/>
    </location>
</feature>
<feature type="disulfide bond" evidence="1">
    <location>
        <begin position="138"/>
        <end position="259"/>
    </location>
</feature>
<feature type="disulfide bond" evidence="1">
    <location>
        <begin position="176"/>
        <end position="273"/>
    </location>
</feature>
<feature type="disulfide bond" evidence="1">
    <location>
        <begin position="188"/>
        <end position="197"/>
    </location>
</feature>
<organism>
    <name type="scientific">Equine herpesvirus 1 (strain Kentucky D)</name>
    <name type="common">EHV-1</name>
    <name type="synonym">Equine abortion virus</name>
    <dbReference type="NCBI Taxonomy" id="10330"/>
    <lineage>
        <taxon>Viruses</taxon>
        <taxon>Duplodnaviria</taxon>
        <taxon>Heunggongvirae</taxon>
        <taxon>Peploviricota</taxon>
        <taxon>Herviviricetes</taxon>
        <taxon>Herpesvirales</taxon>
        <taxon>Orthoherpesviridae</taxon>
        <taxon>Alphaherpesvirinae</taxon>
        <taxon>Varicellovirus</taxon>
        <taxon>Varicellovirus equidalpha1</taxon>
        <taxon>Equid alphaherpesvirus 1</taxon>
    </lineage>
</organism>
<proteinExistence type="inferred from homology"/>
<organismHost>
    <name type="scientific">Equus caballus</name>
    <name type="common">Horse</name>
    <dbReference type="NCBI Taxonomy" id="9796"/>
</organismHost>
<gene>
    <name type="primary">gD</name>
    <name type="synonym">GP17/18</name>
</gene>
<accession>P68327</accession>
<accession>P24379</accession>
<comment type="function">
    <text evidence="2">Envelope glycoprotein that binds to host cell entry receptors, promoting the virus entry into host cells. May trigger fusion with host membrane, by recruiting the fusion machinery composed of gB and gH/gL (By similarity).</text>
</comment>
<comment type="subcellular location">
    <subcellularLocation>
        <location evidence="2">Virion membrane</location>
        <topology evidence="2">Single-pass type I membrane protein</topology>
    </subcellularLocation>
    <text evidence="3">During virion morphogenesis, this protein probably accumulates in the endosomes and trans-Golgi where secondary envelopment occurs.</text>
</comment>
<comment type="similarity">
    <text evidence="6">Belongs to the herpesviridae glycoprotein D family.</text>
</comment>
<comment type="caution">
    <text evidence="6">It is uncertain whether Met-1 or Met-51 is the initiator.</text>
</comment>
<evidence type="ECO:0000250" key="1">
    <source>
        <dbReference type="UniProtKB" id="P57083"/>
    </source>
</evidence>
<evidence type="ECO:0000250" key="2">
    <source>
        <dbReference type="UniProtKB" id="Q05059"/>
    </source>
</evidence>
<evidence type="ECO:0000250" key="3">
    <source>
        <dbReference type="UniProtKB" id="Q69091"/>
    </source>
</evidence>
<evidence type="ECO:0000255" key="4"/>
<evidence type="ECO:0000256" key="5">
    <source>
        <dbReference type="SAM" id="MobiDB-lite"/>
    </source>
</evidence>
<evidence type="ECO:0000305" key="6"/>